<feature type="chain" id="PRO_0000356063" description="Pentatricopeptide repeat-containing protein At2g48000">
    <location>
        <begin position="1"/>
        <end position="481"/>
    </location>
</feature>
<feature type="repeat" description="PPR 1">
    <location>
        <begin position="147"/>
        <end position="181"/>
    </location>
</feature>
<feature type="repeat" description="PPR 2">
    <location>
        <begin position="187"/>
        <end position="221"/>
    </location>
</feature>
<feature type="repeat" description="PPR 3">
    <location>
        <begin position="222"/>
        <end position="256"/>
    </location>
</feature>
<feature type="repeat" description="PPR 4">
    <location>
        <begin position="257"/>
        <end position="287"/>
    </location>
</feature>
<feature type="repeat" description="PPR 5">
    <location>
        <begin position="292"/>
        <end position="324"/>
    </location>
</feature>
<feature type="repeat" description="PPR 6">
    <location>
        <begin position="328"/>
        <end position="362"/>
    </location>
</feature>
<feature type="repeat" description="PPR 7">
    <location>
        <begin position="364"/>
        <end position="398"/>
    </location>
</feature>
<feature type="repeat" description="PPR 8">
    <location>
        <begin position="399"/>
        <end position="433"/>
    </location>
</feature>
<feature type="repeat" description="PPR 9">
    <location>
        <begin position="434"/>
        <end position="469"/>
    </location>
</feature>
<protein>
    <recommendedName>
        <fullName>Pentatricopeptide repeat-containing protein At2g48000</fullName>
    </recommendedName>
</protein>
<comment type="similarity">
    <text evidence="1">Belongs to the PPR family. P subfamily.</text>
</comment>
<comment type="sequence caution" evidence="1">
    <conflict type="erroneous initiation">
        <sequence resource="EMBL-CDS" id="AAM20584"/>
    </conflict>
</comment>
<comment type="online information" name="Pentatricopeptide repeat proteins">
    <link uri="https://ppr.plantenergy.uwa.edu.au"/>
</comment>
<evidence type="ECO:0000305" key="1"/>
<proteinExistence type="evidence at transcript level"/>
<reference key="1">
    <citation type="journal article" date="1999" name="Nature">
        <title>Sequence and analysis of chromosome 2 of the plant Arabidopsis thaliana.</title>
        <authorList>
            <person name="Lin X."/>
            <person name="Kaul S."/>
            <person name="Rounsley S.D."/>
            <person name="Shea T.P."/>
            <person name="Benito M.-I."/>
            <person name="Town C.D."/>
            <person name="Fujii C.Y."/>
            <person name="Mason T.M."/>
            <person name="Bowman C.L."/>
            <person name="Barnstead M.E."/>
            <person name="Feldblyum T.V."/>
            <person name="Buell C.R."/>
            <person name="Ketchum K.A."/>
            <person name="Lee J.J."/>
            <person name="Ronning C.M."/>
            <person name="Koo H.L."/>
            <person name="Moffat K.S."/>
            <person name="Cronin L.A."/>
            <person name="Shen M."/>
            <person name="Pai G."/>
            <person name="Van Aken S."/>
            <person name="Umayam L."/>
            <person name="Tallon L.J."/>
            <person name="Gill J.E."/>
            <person name="Adams M.D."/>
            <person name="Carrera A.J."/>
            <person name="Creasy T.H."/>
            <person name="Goodman H.M."/>
            <person name="Somerville C.R."/>
            <person name="Copenhaver G.P."/>
            <person name="Preuss D."/>
            <person name="Nierman W.C."/>
            <person name="White O."/>
            <person name="Eisen J.A."/>
            <person name="Salzberg S.L."/>
            <person name="Fraser C.M."/>
            <person name="Venter J.C."/>
        </authorList>
    </citation>
    <scope>NUCLEOTIDE SEQUENCE [LARGE SCALE GENOMIC DNA]</scope>
    <source>
        <strain>cv. Columbia</strain>
    </source>
</reference>
<reference key="2">
    <citation type="journal article" date="2017" name="Plant J.">
        <title>Araport11: a complete reannotation of the Arabidopsis thaliana reference genome.</title>
        <authorList>
            <person name="Cheng C.Y."/>
            <person name="Krishnakumar V."/>
            <person name="Chan A.P."/>
            <person name="Thibaud-Nissen F."/>
            <person name="Schobel S."/>
            <person name="Town C.D."/>
        </authorList>
    </citation>
    <scope>GENOME REANNOTATION</scope>
    <source>
        <strain>cv. Columbia</strain>
    </source>
</reference>
<reference key="3">
    <citation type="journal article" date="2003" name="Science">
        <title>Empirical analysis of transcriptional activity in the Arabidopsis genome.</title>
        <authorList>
            <person name="Yamada K."/>
            <person name="Lim J."/>
            <person name="Dale J.M."/>
            <person name="Chen H."/>
            <person name="Shinn P."/>
            <person name="Palm C.J."/>
            <person name="Southwick A.M."/>
            <person name="Wu H.C."/>
            <person name="Kim C.J."/>
            <person name="Nguyen M."/>
            <person name="Pham P.K."/>
            <person name="Cheuk R.F."/>
            <person name="Karlin-Newmann G."/>
            <person name="Liu S.X."/>
            <person name="Lam B."/>
            <person name="Sakano H."/>
            <person name="Wu T."/>
            <person name="Yu G."/>
            <person name="Miranda M."/>
            <person name="Quach H.L."/>
            <person name="Tripp M."/>
            <person name="Chang C.H."/>
            <person name="Lee J.M."/>
            <person name="Toriumi M.J."/>
            <person name="Chan M.M."/>
            <person name="Tang C.C."/>
            <person name="Onodera C.S."/>
            <person name="Deng J.M."/>
            <person name="Akiyama K."/>
            <person name="Ansari Y."/>
            <person name="Arakawa T."/>
            <person name="Banh J."/>
            <person name="Banno F."/>
            <person name="Bowser L."/>
            <person name="Brooks S.Y."/>
            <person name="Carninci P."/>
            <person name="Chao Q."/>
            <person name="Choy N."/>
            <person name="Enju A."/>
            <person name="Goldsmith A.D."/>
            <person name="Gurjal M."/>
            <person name="Hansen N.F."/>
            <person name="Hayashizaki Y."/>
            <person name="Johnson-Hopson C."/>
            <person name="Hsuan V.W."/>
            <person name="Iida K."/>
            <person name="Karnes M."/>
            <person name="Khan S."/>
            <person name="Koesema E."/>
            <person name="Ishida J."/>
            <person name="Jiang P.X."/>
            <person name="Jones T."/>
            <person name="Kawai J."/>
            <person name="Kamiya A."/>
            <person name="Meyers C."/>
            <person name="Nakajima M."/>
            <person name="Narusaka M."/>
            <person name="Seki M."/>
            <person name="Sakurai T."/>
            <person name="Satou M."/>
            <person name="Tamse R."/>
            <person name="Vaysberg M."/>
            <person name="Wallender E.K."/>
            <person name="Wong C."/>
            <person name="Yamamura Y."/>
            <person name="Yuan S."/>
            <person name="Shinozaki K."/>
            <person name="Davis R.W."/>
            <person name="Theologis A."/>
            <person name="Ecker J.R."/>
        </authorList>
    </citation>
    <scope>NUCLEOTIDE SEQUENCE [LARGE SCALE MRNA] OF 7-481</scope>
    <scope>NUCLEOTIDE SEQUENCE [LARGE SCALE MRNA] OF 115-481</scope>
    <source>
        <strain>cv. Columbia</strain>
    </source>
</reference>
<reference key="4">
    <citation type="journal article" date="2004" name="Plant Cell">
        <title>Genome-wide analysis of Arabidopsis pentatricopeptide repeat proteins reveals their essential role in organelle biogenesis.</title>
        <authorList>
            <person name="Lurin C."/>
            <person name="Andres C."/>
            <person name="Aubourg S."/>
            <person name="Bellaoui M."/>
            <person name="Bitton F."/>
            <person name="Bruyere C."/>
            <person name="Caboche M."/>
            <person name="Debast C."/>
            <person name="Gualberto J."/>
            <person name="Hoffmann B."/>
            <person name="Lecharny A."/>
            <person name="Le Ret M."/>
            <person name="Martin-Magniette M.-L."/>
            <person name="Mireau H."/>
            <person name="Peeters N."/>
            <person name="Renou J.-P."/>
            <person name="Szurek B."/>
            <person name="Taconnat L."/>
            <person name="Small I."/>
        </authorList>
    </citation>
    <scope>GENE FAMILY</scope>
</reference>
<organism>
    <name type="scientific">Arabidopsis thaliana</name>
    <name type="common">Mouse-ear cress</name>
    <dbReference type="NCBI Taxonomy" id="3702"/>
    <lineage>
        <taxon>Eukaryota</taxon>
        <taxon>Viridiplantae</taxon>
        <taxon>Streptophyta</taxon>
        <taxon>Embryophyta</taxon>
        <taxon>Tracheophyta</taxon>
        <taxon>Spermatophyta</taxon>
        <taxon>Magnoliopsida</taxon>
        <taxon>eudicotyledons</taxon>
        <taxon>Gunneridae</taxon>
        <taxon>Pentapetalae</taxon>
        <taxon>rosids</taxon>
        <taxon>malvids</taxon>
        <taxon>Brassicales</taxon>
        <taxon>Brassicaceae</taxon>
        <taxon>Camelineae</taxon>
        <taxon>Arabidopsis</taxon>
    </lineage>
</organism>
<name>PP204_ARATH</name>
<keyword id="KW-1185">Reference proteome</keyword>
<keyword id="KW-0677">Repeat</keyword>
<sequence>MKKRMWRISLISQISDLLCLSRGSSSTLKTLTPFCFTLSRSPFHQSGGDDDASGLKNQLLRFRNDSGKVASVLERNKIQGAAFVELLRQLRPWPVLSQLVFDWRRNKALCDGLPMTADEYAKGITISGRLKNVDLALSLFHESANKTTSVYNALMGAYLCNGLSHHCEQLFLDFNSQQDGPSSSTPSVSTYNILISLYGRLIMVERMESVFLQLQQLNILPDSSTYNNLIAGYIYAWDWDKMEATFHSMKNGLVKPTLATYLLMLRGYANSGNLLRMEDMYQAVKRHVDRNEIKLIESMICAYYRSCHKDRIRKIKTLSKLIPKKSYKPWLYLLLMQVYAKDDNLHAMENFIDQAITKGLQIETDGIMRSIVASYFRCNAVDKLAKFVQRANSAGWKMSRSMFHGLMIMYGSQKRFKEMENVLSEMESFKISRSKKTLCILLRVYAATHGQEHKVNQVAGMMLKHGHDFQRPEASKRVMGK</sequence>
<gene>
    <name type="ordered locus">At2g48000</name>
    <name type="ORF">T9J23.15</name>
</gene>
<accession>Q9ZU88</accession>
<accession>Q8L483</accession>
<dbReference type="EMBL" id="AC006072">
    <property type="protein sequence ID" value="AAD13704.1"/>
    <property type="molecule type" value="Genomic_DNA"/>
</dbReference>
<dbReference type="EMBL" id="CP002685">
    <property type="protein sequence ID" value="AEC10922.1"/>
    <property type="molecule type" value="Genomic_DNA"/>
</dbReference>
<dbReference type="EMBL" id="AY099733">
    <property type="protein sequence ID" value="AAM20584.1"/>
    <property type="status" value="ALT_INIT"/>
    <property type="molecule type" value="mRNA"/>
</dbReference>
<dbReference type="EMBL" id="AY128908">
    <property type="protein sequence ID" value="AAM91308.1"/>
    <property type="molecule type" value="mRNA"/>
</dbReference>
<dbReference type="PIR" id="B84922">
    <property type="entry name" value="B84922"/>
</dbReference>
<dbReference type="RefSeq" id="NP_850482.3">
    <property type="nucleotide sequence ID" value="NM_180151.4"/>
</dbReference>
<dbReference type="SMR" id="Q9ZU88"/>
<dbReference type="FunCoup" id="Q9ZU88">
    <property type="interactions" value="17"/>
</dbReference>
<dbReference type="GlyGen" id="Q9ZU88">
    <property type="glycosylation" value="1 site"/>
</dbReference>
<dbReference type="PaxDb" id="3702-AT2G48000.1"/>
<dbReference type="EnsemblPlants" id="AT2G48000.1">
    <property type="protein sequence ID" value="AT2G48000.1"/>
    <property type="gene ID" value="AT2G48000"/>
</dbReference>
<dbReference type="GeneID" id="819412"/>
<dbReference type="Gramene" id="AT2G48000.1">
    <property type="protein sequence ID" value="AT2G48000.1"/>
    <property type="gene ID" value="AT2G48000"/>
</dbReference>
<dbReference type="KEGG" id="ath:AT2G48000"/>
<dbReference type="Araport" id="AT2G48000"/>
<dbReference type="TAIR" id="AT2G48000"/>
<dbReference type="eggNOG" id="KOG4197">
    <property type="taxonomic scope" value="Eukaryota"/>
</dbReference>
<dbReference type="HOGENOM" id="CLU_034990_0_0_1"/>
<dbReference type="InParanoid" id="Q9ZU88"/>
<dbReference type="OMA" id="KMSRSMF"/>
<dbReference type="OrthoDB" id="185373at2759"/>
<dbReference type="PhylomeDB" id="Q9ZU88"/>
<dbReference type="PRO" id="PR:Q9ZU88"/>
<dbReference type="Proteomes" id="UP000006548">
    <property type="component" value="Chromosome 2"/>
</dbReference>
<dbReference type="ExpressionAtlas" id="Q9ZU88">
    <property type="expression patterns" value="baseline and differential"/>
</dbReference>
<dbReference type="GO" id="GO:0003729">
    <property type="term" value="F:mRNA binding"/>
    <property type="evidence" value="ECO:0007669"/>
    <property type="project" value="InterPro"/>
</dbReference>
<dbReference type="Gene3D" id="1.25.40.10">
    <property type="entry name" value="Tetratricopeptide repeat domain"/>
    <property type="match status" value="2"/>
</dbReference>
<dbReference type="InterPro" id="IPR002885">
    <property type="entry name" value="Pentatricopeptide_rpt"/>
</dbReference>
<dbReference type="InterPro" id="IPR044179">
    <property type="entry name" value="PPR5-like"/>
</dbReference>
<dbReference type="InterPro" id="IPR011990">
    <property type="entry name" value="TPR-like_helical_dom_sf"/>
</dbReference>
<dbReference type="NCBIfam" id="TIGR00756">
    <property type="entry name" value="PPR"/>
    <property type="match status" value="1"/>
</dbReference>
<dbReference type="PANTHER" id="PTHR47874">
    <property type="entry name" value="EXPRESSED PROTEIN"/>
    <property type="match status" value="1"/>
</dbReference>
<dbReference type="PANTHER" id="PTHR47874:SF1">
    <property type="entry name" value="OS05G0407900 PROTEIN"/>
    <property type="match status" value="1"/>
</dbReference>
<dbReference type="Pfam" id="PF01535">
    <property type="entry name" value="PPR"/>
    <property type="match status" value="2"/>
</dbReference>
<dbReference type="Pfam" id="PF13041">
    <property type="entry name" value="PPR_2"/>
    <property type="match status" value="1"/>
</dbReference>
<dbReference type="PROSITE" id="PS51375">
    <property type="entry name" value="PPR"/>
    <property type="match status" value="7"/>
</dbReference>